<accession>Q54238</accession>
<reference key="1">
    <citation type="journal article" date="1995" name="J. Bacteriol.">
        <title>Cloning and characterization of a gene involved in aerial mycelium formation in Streptomyces griseus.</title>
        <authorList>
            <person name="Kudo N."/>
            <person name="Kimura M."/>
            <person name="Beppu T."/>
            <person name="Horinouchi S."/>
        </authorList>
    </citation>
    <scope>NUCLEOTIDE SEQUENCE [GENOMIC DNA]</scope>
    <source>
        <strain>IFO 13350 / CBS 651.72</strain>
    </source>
</reference>
<keyword id="KW-0012">Acyltransferase</keyword>
<keyword id="KW-0808">Transferase</keyword>
<comment type="subunit">
    <text evidence="1">Homohexamer; trimer of dimers.</text>
</comment>
<comment type="similarity">
    <text evidence="1">Belongs to the acetyltransferase Eis family.</text>
</comment>
<organism>
    <name type="scientific">Streptomyces griseus</name>
    <dbReference type="NCBI Taxonomy" id="1911"/>
    <lineage>
        <taxon>Bacteria</taxon>
        <taxon>Bacillati</taxon>
        <taxon>Actinomycetota</taxon>
        <taxon>Actinomycetes</taxon>
        <taxon>Kitasatosporales</taxon>
        <taxon>Streptomycetaceae</taxon>
        <taxon>Streptomyces</taxon>
    </lineage>
</organism>
<protein>
    <recommendedName>
        <fullName evidence="1">Uncharacterized N-acetyltransferase ORF5</fullName>
        <ecNumber evidence="1">2.3.1.-</ecNumber>
    </recommendedName>
</protein>
<dbReference type="EC" id="2.3.1.-" evidence="1"/>
<dbReference type="EMBL" id="D63706">
    <property type="protein sequence ID" value="BAA09837.1"/>
    <property type="molecule type" value="Genomic_DNA"/>
</dbReference>
<dbReference type="RefSeq" id="WP_012380280.1">
    <property type="nucleotide sequence ID" value="NZ_UAVD01000012.1"/>
</dbReference>
<dbReference type="SMR" id="Q54238"/>
<dbReference type="PATRIC" id="fig|455632.4.peg.4048"/>
<dbReference type="OMA" id="RRPWCPD"/>
<dbReference type="OrthoDB" id="8399956at2"/>
<dbReference type="GO" id="GO:0034069">
    <property type="term" value="F:aminoglycoside N-acetyltransferase activity"/>
    <property type="evidence" value="ECO:0007669"/>
    <property type="project" value="TreeGrafter"/>
</dbReference>
<dbReference type="GO" id="GO:0030649">
    <property type="term" value="P:aminoglycoside antibiotic catabolic process"/>
    <property type="evidence" value="ECO:0007669"/>
    <property type="project" value="TreeGrafter"/>
</dbReference>
<dbReference type="Gene3D" id="3.40.630.30">
    <property type="match status" value="2"/>
</dbReference>
<dbReference type="Gene3D" id="3.30.1050.10">
    <property type="entry name" value="SCP2 sterol-binding domain"/>
    <property type="match status" value="1"/>
</dbReference>
<dbReference type="HAMAP" id="MF_01812">
    <property type="entry name" value="Eis"/>
    <property type="match status" value="1"/>
</dbReference>
<dbReference type="InterPro" id="IPR041380">
    <property type="entry name" value="Acetyltransf_17"/>
</dbReference>
<dbReference type="InterPro" id="IPR051554">
    <property type="entry name" value="Acetyltransferase_Eis"/>
</dbReference>
<dbReference type="InterPro" id="IPR016181">
    <property type="entry name" value="Acyl_CoA_acyltransferase"/>
</dbReference>
<dbReference type="InterPro" id="IPR025559">
    <property type="entry name" value="Eis_dom"/>
</dbReference>
<dbReference type="InterPro" id="IPR000182">
    <property type="entry name" value="GNAT_dom"/>
</dbReference>
<dbReference type="InterPro" id="IPR022902">
    <property type="entry name" value="NAcTrfase_Eis"/>
</dbReference>
<dbReference type="InterPro" id="IPR036527">
    <property type="entry name" value="SCP2_sterol-bd_dom_sf"/>
</dbReference>
<dbReference type="NCBIfam" id="NF002367">
    <property type="entry name" value="PRK01346.1-4"/>
    <property type="match status" value="1"/>
</dbReference>
<dbReference type="PANTHER" id="PTHR37817">
    <property type="entry name" value="N-ACETYLTRANSFERASE EIS"/>
    <property type="match status" value="1"/>
</dbReference>
<dbReference type="PANTHER" id="PTHR37817:SF1">
    <property type="entry name" value="N-ACETYLTRANSFERASE EIS"/>
    <property type="match status" value="1"/>
</dbReference>
<dbReference type="Pfam" id="PF17668">
    <property type="entry name" value="Acetyltransf_17"/>
    <property type="match status" value="1"/>
</dbReference>
<dbReference type="Pfam" id="PF13527">
    <property type="entry name" value="Acetyltransf_9"/>
    <property type="match status" value="1"/>
</dbReference>
<dbReference type="Pfam" id="PF13530">
    <property type="entry name" value="SCP2_2"/>
    <property type="match status" value="1"/>
</dbReference>
<dbReference type="SUPFAM" id="SSF55729">
    <property type="entry name" value="Acyl-CoA N-acyltransferases (Nat)"/>
    <property type="match status" value="1"/>
</dbReference>
<dbReference type="SUPFAM" id="SSF55718">
    <property type="entry name" value="SCP-like"/>
    <property type="match status" value="1"/>
</dbReference>
<dbReference type="PROSITE" id="PS51186">
    <property type="entry name" value="GNAT"/>
    <property type="match status" value="1"/>
</dbReference>
<name>ORF5_STRGR</name>
<sequence>MSLDVRTITPSESAEWMRAVSTGFLTAGTPSEELVADRFAGADLSRTQGAFEAGRCVATFRSFAQELTVVGGATVAADAISGVTVTPTHRRRGLLSRMMATDLAAAKERGEPVASLIAAEYPIYGRYGFGPAAWTSVWEVSVYRAGLDARRSGQPADGGRIEMVDGADVRKLGPEVHGALAARQPGVVTRDERWWRQRTGAAPSSAHEKWTEPFYVVHRAADGTVDGLMTYGTDDTWGDAKQPLNTASVRDMIALNPAAERALWHYLCSIDWITTIRSGYRAPDDLLPLLLPDPRAARMITNADWLWLRMLDVPRALEARTYGTEASLVLEVRDDAGLAGGRFLLDASTGGARCVSTTRSADLVLGVAELATLYLGDESVRRLVDLGRAEESRAGAATTADAVFRTGRRPWCPDVF</sequence>
<feature type="chain" id="PRO_0000220267" description="Uncharacterized N-acetyltransferase ORF5">
    <location>
        <begin position="1"/>
        <end position="416"/>
    </location>
</feature>
<feature type="domain" description="N-acetyltransferase" evidence="1">
    <location>
        <begin position="3"/>
        <end position="150"/>
    </location>
</feature>
<feature type="active site" description="Proton donor" evidence="1">
    <location>
        <position position="124"/>
    </location>
</feature>
<feature type="active site" description="Proton acceptor; via carboxylate" evidence="1">
    <location>
        <position position="416"/>
    </location>
</feature>
<feature type="binding site" evidence="1">
    <location>
        <begin position="83"/>
        <end position="85"/>
    </location>
    <ligand>
        <name>acetyl-CoA</name>
        <dbReference type="ChEBI" id="CHEBI:57288"/>
    </ligand>
</feature>
<feature type="binding site" evidence="1">
    <location>
        <begin position="91"/>
        <end position="96"/>
    </location>
    <ligand>
        <name>acetyl-CoA</name>
        <dbReference type="ChEBI" id="CHEBI:57288"/>
    </ligand>
</feature>
<evidence type="ECO:0000255" key="1">
    <source>
        <dbReference type="HAMAP-Rule" id="MF_01812"/>
    </source>
</evidence>
<proteinExistence type="inferred from homology"/>